<evidence type="ECO:0000255" key="1">
    <source>
        <dbReference type="HAMAP-Rule" id="MF_01196"/>
    </source>
</evidence>
<evidence type="ECO:0000256" key="2">
    <source>
        <dbReference type="SAM" id="MobiDB-lite"/>
    </source>
</evidence>
<dbReference type="EMBL" id="CP000948">
    <property type="protein sequence ID" value="ACB04940.1"/>
    <property type="molecule type" value="Genomic_DNA"/>
</dbReference>
<dbReference type="RefSeq" id="WP_001296623.1">
    <property type="nucleotide sequence ID" value="NC_010473.1"/>
</dbReference>
<dbReference type="SMR" id="B1XB94"/>
<dbReference type="GeneID" id="93777970"/>
<dbReference type="KEGG" id="ecd:ECDH10B_4117"/>
<dbReference type="HOGENOM" id="CLU_171174_2_0_6"/>
<dbReference type="GO" id="GO:0005737">
    <property type="term" value="C:cytoplasm"/>
    <property type="evidence" value="ECO:0007669"/>
    <property type="project" value="UniProtKB-SubCell"/>
</dbReference>
<dbReference type="GO" id="GO:0000917">
    <property type="term" value="P:division septum assembly"/>
    <property type="evidence" value="ECO:0007669"/>
    <property type="project" value="UniProtKB-KW"/>
</dbReference>
<dbReference type="GO" id="GO:0043093">
    <property type="term" value="P:FtsZ-dependent cytokinesis"/>
    <property type="evidence" value="ECO:0007669"/>
    <property type="project" value="UniProtKB-UniRule"/>
</dbReference>
<dbReference type="FunFam" id="1.20.5.340:FF:000014">
    <property type="entry name" value="Cell division protein ZapB"/>
    <property type="match status" value="1"/>
</dbReference>
<dbReference type="Gene3D" id="1.20.5.340">
    <property type="match status" value="1"/>
</dbReference>
<dbReference type="HAMAP" id="MF_01196">
    <property type="entry name" value="ZapB"/>
    <property type="match status" value="1"/>
</dbReference>
<dbReference type="InterPro" id="IPR009252">
    <property type="entry name" value="Cell_div_ZapB"/>
</dbReference>
<dbReference type="NCBIfam" id="NF011951">
    <property type="entry name" value="PRK15422.1"/>
    <property type="match status" value="1"/>
</dbReference>
<dbReference type="Pfam" id="PF06005">
    <property type="entry name" value="ZapB"/>
    <property type="match status" value="1"/>
</dbReference>
<gene>
    <name evidence="1" type="primary">zapB</name>
    <name type="ordered locus">ECDH10B_4117</name>
</gene>
<keyword id="KW-0007">Acetylation</keyword>
<keyword id="KW-0131">Cell cycle</keyword>
<keyword id="KW-0132">Cell division</keyword>
<keyword id="KW-0175">Coiled coil</keyword>
<keyword id="KW-0963">Cytoplasm</keyword>
<keyword id="KW-0717">Septation</keyword>
<feature type="chain" id="PRO_1000138433" description="Cell division protein ZapB">
    <location>
        <begin position="1"/>
        <end position="81"/>
    </location>
</feature>
<feature type="region of interest" description="Disordered" evidence="2">
    <location>
        <begin position="36"/>
        <end position="67"/>
    </location>
</feature>
<feature type="coiled-coil region" evidence="1">
    <location>
        <begin position="5"/>
        <end position="81"/>
    </location>
</feature>
<feature type="compositionally biased region" description="Polar residues" evidence="2">
    <location>
        <begin position="37"/>
        <end position="47"/>
    </location>
</feature>
<feature type="compositionally biased region" description="Basic and acidic residues" evidence="2">
    <location>
        <begin position="48"/>
        <end position="62"/>
    </location>
</feature>
<feature type="modified residue" description="N6-acetyllysine" evidence="1">
    <location>
        <position position="10"/>
    </location>
</feature>
<proteinExistence type="inferred from homology"/>
<name>ZAPB_ECODH</name>
<accession>B1XB94</accession>
<organism>
    <name type="scientific">Escherichia coli (strain K12 / DH10B)</name>
    <dbReference type="NCBI Taxonomy" id="316385"/>
    <lineage>
        <taxon>Bacteria</taxon>
        <taxon>Pseudomonadati</taxon>
        <taxon>Pseudomonadota</taxon>
        <taxon>Gammaproteobacteria</taxon>
        <taxon>Enterobacterales</taxon>
        <taxon>Enterobacteriaceae</taxon>
        <taxon>Escherichia</taxon>
    </lineage>
</organism>
<reference key="1">
    <citation type="journal article" date="2008" name="J. Bacteriol.">
        <title>The complete genome sequence of Escherichia coli DH10B: insights into the biology of a laboratory workhorse.</title>
        <authorList>
            <person name="Durfee T."/>
            <person name="Nelson R."/>
            <person name="Baldwin S."/>
            <person name="Plunkett G. III"/>
            <person name="Burland V."/>
            <person name="Mau B."/>
            <person name="Petrosino J.F."/>
            <person name="Qin X."/>
            <person name="Muzny D.M."/>
            <person name="Ayele M."/>
            <person name="Gibbs R.A."/>
            <person name="Csorgo B."/>
            <person name="Posfai G."/>
            <person name="Weinstock G.M."/>
            <person name="Blattner F.R."/>
        </authorList>
    </citation>
    <scope>NUCLEOTIDE SEQUENCE [LARGE SCALE GENOMIC DNA]</scope>
    <source>
        <strain>K12 / DH10B</strain>
    </source>
</reference>
<sequence length="81" mass="9635">MTMSLEVFEKLEAKVQQAIDTITLLQMEIEELKEKNNSLSQEVQNAQHQREELERENNHLKEQQNGWQERLQALLGRMEEV</sequence>
<comment type="function">
    <text evidence="1">Non-essential, abundant cell division factor that is required for proper Z-ring formation. It is recruited early to the divisome by direct interaction with FtsZ, stimulating Z-ring assembly and thereby promoting cell division earlier in the cell cycle. Its recruitment to the Z-ring requires functional FtsA or ZipA.</text>
</comment>
<comment type="subunit">
    <text evidence="1">Homodimer. The ends of the coiled-coil dimer bind to each other, forming polymers. Interacts with FtsZ.</text>
</comment>
<comment type="subcellular location">
    <subcellularLocation>
        <location evidence="1">Cytoplasm</location>
    </subcellularLocation>
    <text evidence="1">Localizes to the septum at mid-cell, in a FtsZ-like pattern.</text>
</comment>
<comment type="similarity">
    <text evidence="1">Belongs to the ZapB family.</text>
</comment>
<protein>
    <recommendedName>
        <fullName evidence="1">Cell division protein ZapB</fullName>
    </recommendedName>
</protein>